<keyword id="KW-1003">Cell membrane</keyword>
<keyword id="KW-0963">Cytoplasm</keyword>
<keyword id="KW-0342">GTP-binding</keyword>
<keyword id="KW-0472">Membrane</keyword>
<keyword id="KW-0547">Nucleotide-binding</keyword>
<keyword id="KW-0690">Ribosome biogenesis</keyword>
<keyword id="KW-0694">RNA-binding</keyword>
<keyword id="KW-0699">rRNA-binding</keyword>
<protein>
    <recommendedName>
        <fullName evidence="1">GTPase Era</fullName>
    </recommendedName>
</protein>
<proteinExistence type="inferred from homology"/>
<accession>P64088</accession>
<accession>Q8P266</accession>
<organism>
    <name type="scientific">Streptococcus pyogenes serotype M18 (strain MGAS8232)</name>
    <dbReference type="NCBI Taxonomy" id="186103"/>
    <lineage>
        <taxon>Bacteria</taxon>
        <taxon>Bacillati</taxon>
        <taxon>Bacillota</taxon>
        <taxon>Bacilli</taxon>
        <taxon>Lactobacillales</taxon>
        <taxon>Streptococcaceae</taxon>
        <taxon>Streptococcus</taxon>
    </lineage>
</organism>
<gene>
    <name evidence="1" type="primary">era</name>
    <name type="ordered locus">spyM18_0517</name>
</gene>
<dbReference type="EMBL" id="AE009949">
    <property type="protein sequence ID" value="AAL97234.1"/>
    <property type="molecule type" value="Genomic_DNA"/>
</dbReference>
<dbReference type="RefSeq" id="WP_002985743.1">
    <property type="nucleotide sequence ID" value="NC_003485.1"/>
</dbReference>
<dbReference type="SMR" id="P64088"/>
<dbReference type="GeneID" id="69901289"/>
<dbReference type="KEGG" id="spm:spyM18_0517"/>
<dbReference type="HOGENOM" id="CLU_038009_1_0_9"/>
<dbReference type="GO" id="GO:0005829">
    <property type="term" value="C:cytosol"/>
    <property type="evidence" value="ECO:0007669"/>
    <property type="project" value="TreeGrafter"/>
</dbReference>
<dbReference type="GO" id="GO:0005886">
    <property type="term" value="C:plasma membrane"/>
    <property type="evidence" value="ECO:0007669"/>
    <property type="project" value="UniProtKB-SubCell"/>
</dbReference>
<dbReference type="GO" id="GO:0005525">
    <property type="term" value="F:GTP binding"/>
    <property type="evidence" value="ECO:0007669"/>
    <property type="project" value="UniProtKB-UniRule"/>
</dbReference>
<dbReference type="GO" id="GO:0003924">
    <property type="term" value="F:GTPase activity"/>
    <property type="evidence" value="ECO:0007669"/>
    <property type="project" value="UniProtKB-UniRule"/>
</dbReference>
<dbReference type="GO" id="GO:0043024">
    <property type="term" value="F:ribosomal small subunit binding"/>
    <property type="evidence" value="ECO:0007669"/>
    <property type="project" value="TreeGrafter"/>
</dbReference>
<dbReference type="GO" id="GO:0070181">
    <property type="term" value="F:small ribosomal subunit rRNA binding"/>
    <property type="evidence" value="ECO:0007669"/>
    <property type="project" value="UniProtKB-UniRule"/>
</dbReference>
<dbReference type="GO" id="GO:0000028">
    <property type="term" value="P:ribosomal small subunit assembly"/>
    <property type="evidence" value="ECO:0007669"/>
    <property type="project" value="TreeGrafter"/>
</dbReference>
<dbReference type="CDD" id="cd04163">
    <property type="entry name" value="Era"/>
    <property type="match status" value="1"/>
</dbReference>
<dbReference type="CDD" id="cd22534">
    <property type="entry name" value="KH-II_Era"/>
    <property type="match status" value="1"/>
</dbReference>
<dbReference type="FunFam" id="3.30.300.20:FF:000003">
    <property type="entry name" value="GTPase Era"/>
    <property type="match status" value="1"/>
</dbReference>
<dbReference type="FunFam" id="3.40.50.300:FF:000094">
    <property type="entry name" value="GTPase Era"/>
    <property type="match status" value="1"/>
</dbReference>
<dbReference type="Gene3D" id="3.30.300.20">
    <property type="match status" value="1"/>
</dbReference>
<dbReference type="Gene3D" id="3.40.50.300">
    <property type="entry name" value="P-loop containing nucleotide triphosphate hydrolases"/>
    <property type="match status" value="1"/>
</dbReference>
<dbReference type="HAMAP" id="MF_00367">
    <property type="entry name" value="GTPase_Era"/>
    <property type="match status" value="1"/>
</dbReference>
<dbReference type="InterPro" id="IPR030388">
    <property type="entry name" value="G_ERA_dom"/>
</dbReference>
<dbReference type="InterPro" id="IPR006073">
    <property type="entry name" value="GTP-bd"/>
</dbReference>
<dbReference type="InterPro" id="IPR005662">
    <property type="entry name" value="GTPase_Era-like"/>
</dbReference>
<dbReference type="InterPro" id="IPR015946">
    <property type="entry name" value="KH_dom-like_a/b"/>
</dbReference>
<dbReference type="InterPro" id="IPR004044">
    <property type="entry name" value="KH_dom_type_2"/>
</dbReference>
<dbReference type="InterPro" id="IPR009019">
    <property type="entry name" value="KH_sf_prok-type"/>
</dbReference>
<dbReference type="InterPro" id="IPR027417">
    <property type="entry name" value="P-loop_NTPase"/>
</dbReference>
<dbReference type="InterPro" id="IPR005225">
    <property type="entry name" value="Small_GTP-bd"/>
</dbReference>
<dbReference type="NCBIfam" id="TIGR00436">
    <property type="entry name" value="era"/>
    <property type="match status" value="1"/>
</dbReference>
<dbReference type="NCBIfam" id="NF000908">
    <property type="entry name" value="PRK00089.1"/>
    <property type="match status" value="1"/>
</dbReference>
<dbReference type="NCBIfam" id="TIGR00231">
    <property type="entry name" value="small_GTP"/>
    <property type="match status" value="1"/>
</dbReference>
<dbReference type="PANTHER" id="PTHR42698">
    <property type="entry name" value="GTPASE ERA"/>
    <property type="match status" value="1"/>
</dbReference>
<dbReference type="PANTHER" id="PTHR42698:SF1">
    <property type="entry name" value="GTPASE ERA, MITOCHONDRIAL"/>
    <property type="match status" value="1"/>
</dbReference>
<dbReference type="Pfam" id="PF07650">
    <property type="entry name" value="KH_2"/>
    <property type="match status" value="1"/>
</dbReference>
<dbReference type="Pfam" id="PF01926">
    <property type="entry name" value="MMR_HSR1"/>
    <property type="match status" value="1"/>
</dbReference>
<dbReference type="SUPFAM" id="SSF52540">
    <property type="entry name" value="P-loop containing nucleoside triphosphate hydrolases"/>
    <property type="match status" value="1"/>
</dbReference>
<dbReference type="SUPFAM" id="SSF54814">
    <property type="entry name" value="Prokaryotic type KH domain (KH-domain type II)"/>
    <property type="match status" value="1"/>
</dbReference>
<dbReference type="PROSITE" id="PS51713">
    <property type="entry name" value="G_ERA"/>
    <property type="match status" value="1"/>
</dbReference>
<dbReference type="PROSITE" id="PS50823">
    <property type="entry name" value="KH_TYPE_2"/>
    <property type="match status" value="1"/>
</dbReference>
<reference key="1">
    <citation type="journal article" date="2002" name="Proc. Natl. Acad. Sci. U.S.A.">
        <title>Genome sequence and comparative microarray analysis of serotype M18 group A Streptococcus strains associated with acute rheumatic fever outbreaks.</title>
        <authorList>
            <person name="Smoot J.C."/>
            <person name="Barbian K.D."/>
            <person name="Van Gompel J.J."/>
            <person name="Smoot L.M."/>
            <person name="Chaussee M.S."/>
            <person name="Sylva G.L."/>
            <person name="Sturdevant D.E."/>
            <person name="Ricklefs S.M."/>
            <person name="Porcella S.F."/>
            <person name="Parkins L.D."/>
            <person name="Beres S.B."/>
            <person name="Campbell D.S."/>
            <person name="Smith T.M."/>
            <person name="Zhang Q."/>
            <person name="Kapur V."/>
            <person name="Daly J.A."/>
            <person name="Veasy L.G."/>
            <person name="Musser J.M."/>
        </authorList>
    </citation>
    <scope>NUCLEOTIDE SEQUENCE [LARGE SCALE GENOMIC DNA]</scope>
    <source>
        <strain>MGAS8232</strain>
    </source>
</reference>
<name>ERA_STRP8</name>
<evidence type="ECO:0000255" key="1">
    <source>
        <dbReference type="HAMAP-Rule" id="MF_00367"/>
    </source>
</evidence>
<evidence type="ECO:0000255" key="2">
    <source>
        <dbReference type="PROSITE-ProRule" id="PRU01050"/>
    </source>
</evidence>
<sequence>MFKSGFVAILGRPNVGKSTFLNHVMGQKIAIMSDKAQTTRNKIMGIYTTETEQIVFIDTPGIHKPKTALGDFMVESAYSTLREVETVLFMVPADEKRGKGDDMIIERLKAAKIPVILVINKIDKVHPDQLLEQIDDFRSQMDFKEVVPISALEGNNVPTLIKLLTDNLEEGFQYFPEDQITDHPERFLVSEMVREKVLHLTQQEVPHSVAVVVESMKRDEETDKVHIRATIMVERDSQKGIIIGKQGAMLKKIGKMARRDIELMLGDKVYLETWVKVKKNWRDKKLDLADFGYNEKEY</sequence>
<feature type="chain" id="PRO_0000180063" description="GTPase Era">
    <location>
        <begin position="1"/>
        <end position="298"/>
    </location>
</feature>
<feature type="domain" description="Era-type G" evidence="2">
    <location>
        <begin position="3"/>
        <end position="170"/>
    </location>
</feature>
<feature type="domain" description="KH type-2" evidence="1">
    <location>
        <begin position="201"/>
        <end position="279"/>
    </location>
</feature>
<feature type="region of interest" description="G1" evidence="2">
    <location>
        <begin position="11"/>
        <end position="18"/>
    </location>
</feature>
<feature type="region of interest" description="G2" evidence="2">
    <location>
        <begin position="37"/>
        <end position="41"/>
    </location>
</feature>
<feature type="region of interest" description="G3" evidence="2">
    <location>
        <begin position="58"/>
        <end position="61"/>
    </location>
</feature>
<feature type="region of interest" description="G4" evidence="2">
    <location>
        <begin position="120"/>
        <end position="123"/>
    </location>
</feature>
<feature type="region of interest" description="G5" evidence="2">
    <location>
        <begin position="149"/>
        <end position="151"/>
    </location>
</feature>
<feature type="binding site" evidence="1">
    <location>
        <begin position="11"/>
        <end position="18"/>
    </location>
    <ligand>
        <name>GTP</name>
        <dbReference type="ChEBI" id="CHEBI:37565"/>
    </ligand>
</feature>
<feature type="binding site" evidence="1">
    <location>
        <begin position="58"/>
        <end position="62"/>
    </location>
    <ligand>
        <name>GTP</name>
        <dbReference type="ChEBI" id="CHEBI:37565"/>
    </ligand>
</feature>
<feature type="binding site" evidence="1">
    <location>
        <begin position="120"/>
        <end position="123"/>
    </location>
    <ligand>
        <name>GTP</name>
        <dbReference type="ChEBI" id="CHEBI:37565"/>
    </ligand>
</feature>
<comment type="function">
    <text evidence="1">An essential GTPase that binds both GDP and GTP, with rapid nucleotide exchange. Plays a role in 16S rRNA processing and 30S ribosomal subunit biogenesis and possibly also in cell cycle regulation and energy metabolism.</text>
</comment>
<comment type="subunit">
    <text evidence="1">Monomer.</text>
</comment>
<comment type="subcellular location">
    <subcellularLocation>
        <location>Cytoplasm</location>
    </subcellularLocation>
    <subcellularLocation>
        <location evidence="1">Cell membrane</location>
        <topology evidence="1">Peripheral membrane protein</topology>
    </subcellularLocation>
</comment>
<comment type="similarity">
    <text evidence="1 2">Belongs to the TRAFAC class TrmE-Era-EngA-EngB-Septin-like GTPase superfamily. Era GTPase family.</text>
</comment>